<proteinExistence type="inferred from homology"/>
<comment type="function">
    <text evidence="1">Regulates the transcription of the pyrimidine nucleotide (pyr) operon in response to exogenous pyrimidines.</text>
</comment>
<comment type="function">
    <text evidence="1">Also displays a weak uracil phosphoribosyltransferase activity which is not physiologically significant.</text>
</comment>
<comment type="catalytic activity">
    <reaction evidence="1">
        <text>UMP + diphosphate = 5-phospho-alpha-D-ribose 1-diphosphate + uracil</text>
        <dbReference type="Rhea" id="RHEA:13017"/>
        <dbReference type="ChEBI" id="CHEBI:17568"/>
        <dbReference type="ChEBI" id="CHEBI:33019"/>
        <dbReference type="ChEBI" id="CHEBI:57865"/>
        <dbReference type="ChEBI" id="CHEBI:58017"/>
        <dbReference type="EC" id="2.4.2.9"/>
    </reaction>
</comment>
<comment type="similarity">
    <text evidence="1">Belongs to the purine/pyrimidine phosphoribosyltransferase family. PyrR subfamily.</text>
</comment>
<keyword id="KW-0328">Glycosyltransferase</keyword>
<keyword id="KW-0804">Transcription</keyword>
<keyword id="KW-0805">Transcription regulation</keyword>
<keyword id="KW-0808">Transferase</keyword>
<sequence length="179" mass="20417">MEKIIIDAEQFQRTISRISHQIIEKHSSLDNLVLVGIKRRGAEIAEMLQSRIAELAQTELPLMALDITFYRDDLHLDHQDPVYTGVESQIDITGKNVILIDDVLFTGRTIRAALDALLDFGRATRIELVILVDRGHRELPIRADYVGKNIPTARTEQVQVRTQFYDGMNQVVLIRAKDE</sequence>
<feature type="chain" id="PRO_1000139181" description="Bifunctional protein PyrR">
    <location>
        <begin position="1"/>
        <end position="179"/>
    </location>
</feature>
<feature type="short sequence motif" description="PRPP-binding" evidence="1">
    <location>
        <begin position="97"/>
        <end position="109"/>
    </location>
</feature>
<name>PYRR_ACTP7</name>
<gene>
    <name evidence="1" type="primary">pyrR</name>
    <name type="ordered locus">APP7_0425</name>
</gene>
<organism>
    <name type="scientific">Actinobacillus pleuropneumoniae serotype 7 (strain AP76)</name>
    <dbReference type="NCBI Taxonomy" id="537457"/>
    <lineage>
        <taxon>Bacteria</taxon>
        <taxon>Pseudomonadati</taxon>
        <taxon>Pseudomonadota</taxon>
        <taxon>Gammaproteobacteria</taxon>
        <taxon>Pasteurellales</taxon>
        <taxon>Pasteurellaceae</taxon>
        <taxon>Actinobacillus</taxon>
    </lineage>
</organism>
<protein>
    <recommendedName>
        <fullName evidence="1">Bifunctional protein PyrR</fullName>
    </recommendedName>
    <domain>
        <recommendedName>
            <fullName evidence="1">Pyrimidine operon regulatory protein</fullName>
        </recommendedName>
    </domain>
    <domain>
        <recommendedName>
            <fullName evidence="1">Uracil phosphoribosyltransferase</fullName>
            <shortName evidence="1">UPRTase</shortName>
            <ecNumber evidence="1">2.4.2.9</ecNumber>
        </recommendedName>
    </domain>
</protein>
<evidence type="ECO:0000255" key="1">
    <source>
        <dbReference type="HAMAP-Rule" id="MF_01219"/>
    </source>
</evidence>
<accession>B3H0R5</accession>
<reference key="1">
    <citation type="submission" date="2008-06" db="EMBL/GenBank/DDBJ databases">
        <title>Genome and proteome analysis of A. pleuropneumoniae serotype 7.</title>
        <authorList>
            <person name="Linke B."/>
            <person name="Buettner F."/>
            <person name="Martinez-Arias R."/>
            <person name="Goesmann A."/>
            <person name="Baltes N."/>
            <person name="Tegetmeyer H."/>
            <person name="Singh M."/>
            <person name="Gerlach G.F."/>
        </authorList>
    </citation>
    <scope>NUCLEOTIDE SEQUENCE [LARGE SCALE GENOMIC DNA]</scope>
    <source>
        <strain>AP76</strain>
    </source>
</reference>
<dbReference type="EC" id="2.4.2.9" evidence="1"/>
<dbReference type="EMBL" id="CP001091">
    <property type="protein sequence ID" value="ACE61077.1"/>
    <property type="molecule type" value="Genomic_DNA"/>
</dbReference>
<dbReference type="RefSeq" id="WP_005600504.1">
    <property type="nucleotide sequence ID" value="NC_010939.1"/>
</dbReference>
<dbReference type="SMR" id="B3H0R5"/>
<dbReference type="KEGG" id="apa:APP7_0425"/>
<dbReference type="HOGENOM" id="CLU_094234_2_1_6"/>
<dbReference type="Proteomes" id="UP000001226">
    <property type="component" value="Chromosome"/>
</dbReference>
<dbReference type="GO" id="GO:0004845">
    <property type="term" value="F:uracil phosphoribosyltransferase activity"/>
    <property type="evidence" value="ECO:0007669"/>
    <property type="project" value="UniProtKB-UniRule"/>
</dbReference>
<dbReference type="GO" id="GO:0006355">
    <property type="term" value="P:regulation of DNA-templated transcription"/>
    <property type="evidence" value="ECO:0007669"/>
    <property type="project" value="UniProtKB-UniRule"/>
</dbReference>
<dbReference type="CDD" id="cd06223">
    <property type="entry name" value="PRTases_typeI"/>
    <property type="match status" value="1"/>
</dbReference>
<dbReference type="FunFam" id="3.40.50.2020:FF:000020">
    <property type="entry name" value="Bifunctional protein PyrR"/>
    <property type="match status" value="1"/>
</dbReference>
<dbReference type="Gene3D" id="3.40.50.2020">
    <property type="match status" value="1"/>
</dbReference>
<dbReference type="HAMAP" id="MF_01219">
    <property type="entry name" value="PyrR"/>
    <property type="match status" value="1"/>
</dbReference>
<dbReference type="InterPro" id="IPR000836">
    <property type="entry name" value="PRibTrfase_dom"/>
</dbReference>
<dbReference type="InterPro" id="IPR029057">
    <property type="entry name" value="PRTase-like"/>
</dbReference>
<dbReference type="InterPro" id="IPR023050">
    <property type="entry name" value="PyrR"/>
</dbReference>
<dbReference type="InterPro" id="IPR050137">
    <property type="entry name" value="PyrR_bifunctional"/>
</dbReference>
<dbReference type="NCBIfam" id="NF003549">
    <property type="entry name" value="PRK05205.1-5"/>
    <property type="match status" value="1"/>
</dbReference>
<dbReference type="PANTHER" id="PTHR11608">
    <property type="entry name" value="BIFUNCTIONAL PROTEIN PYRR"/>
    <property type="match status" value="1"/>
</dbReference>
<dbReference type="PANTHER" id="PTHR11608:SF0">
    <property type="entry name" value="BIFUNCTIONAL PROTEIN PYRR"/>
    <property type="match status" value="1"/>
</dbReference>
<dbReference type="Pfam" id="PF00156">
    <property type="entry name" value="Pribosyltran"/>
    <property type="match status" value="1"/>
</dbReference>
<dbReference type="SUPFAM" id="SSF53271">
    <property type="entry name" value="PRTase-like"/>
    <property type="match status" value="1"/>
</dbReference>